<name>UBA4_YEAS7</name>
<dbReference type="EC" id="2.7.7.-" evidence="2"/>
<dbReference type="EC" id="2.8.1.-" evidence="2"/>
<dbReference type="EMBL" id="AAFW02000082">
    <property type="protein sequence ID" value="EDN62350.1"/>
    <property type="molecule type" value="Genomic_DNA"/>
</dbReference>
<dbReference type="SMR" id="A6ZT19"/>
<dbReference type="HOGENOM" id="CLU_013325_1_2_1"/>
<dbReference type="OrthoDB" id="4220at4893"/>
<dbReference type="UniPathway" id="UPA00988"/>
<dbReference type="Proteomes" id="UP000007060">
    <property type="component" value="Unassembled WGS sequence"/>
</dbReference>
<dbReference type="GO" id="GO:0005829">
    <property type="term" value="C:cytosol"/>
    <property type="evidence" value="ECO:0007669"/>
    <property type="project" value="InterPro"/>
</dbReference>
<dbReference type="GO" id="GO:0070566">
    <property type="term" value="F:adenylyltransferase activity"/>
    <property type="evidence" value="ECO:0007669"/>
    <property type="project" value="InterPro"/>
</dbReference>
<dbReference type="GO" id="GO:0005524">
    <property type="term" value="F:ATP binding"/>
    <property type="evidence" value="ECO:0007669"/>
    <property type="project" value="UniProtKB-KW"/>
</dbReference>
<dbReference type="GO" id="GO:0046872">
    <property type="term" value="F:metal ion binding"/>
    <property type="evidence" value="ECO:0007669"/>
    <property type="project" value="UniProtKB-KW"/>
</dbReference>
<dbReference type="GO" id="GO:0004792">
    <property type="term" value="F:thiosulfate-cyanide sulfurtransferase activity"/>
    <property type="evidence" value="ECO:0007669"/>
    <property type="project" value="TreeGrafter"/>
</dbReference>
<dbReference type="GO" id="GO:0042292">
    <property type="term" value="F:URM1 activating enzyme activity"/>
    <property type="evidence" value="ECO:0007669"/>
    <property type="project" value="TreeGrafter"/>
</dbReference>
<dbReference type="GO" id="GO:0032447">
    <property type="term" value="P:protein urmylation"/>
    <property type="evidence" value="ECO:0007669"/>
    <property type="project" value="UniProtKB-UniRule"/>
</dbReference>
<dbReference type="GO" id="GO:0002143">
    <property type="term" value="P:tRNA wobble position uridine thiolation"/>
    <property type="evidence" value="ECO:0007669"/>
    <property type="project" value="InterPro"/>
</dbReference>
<dbReference type="CDD" id="cd01526">
    <property type="entry name" value="RHOD_ThiF"/>
    <property type="match status" value="1"/>
</dbReference>
<dbReference type="CDD" id="cd00757">
    <property type="entry name" value="ThiF_MoeB_HesA_family"/>
    <property type="match status" value="1"/>
</dbReference>
<dbReference type="FunFam" id="3.40.250.10:FF:000014">
    <property type="entry name" value="Adenylyltransferase and sulfurtransferase MOCS3"/>
    <property type="match status" value="1"/>
</dbReference>
<dbReference type="FunFam" id="3.40.50.720:FF:000033">
    <property type="entry name" value="Adenylyltransferase and sulfurtransferase MOCS3"/>
    <property type="match status" value="1"/>
</dbReference>
<dbReference type="Gene3D" id="3.40.50.720">
    <property type="entry name" value="NAD(P)-binding Rossmann-like Domain"/>
    <property type="match status" value="1"/>
</dbReference>
<dbReference type="Gene3D" id="3.40.250.10">
    <property type="entry name" value="Rhodanese-like domain"/>
    <property type="match status" value="1"/>
</dbReference>
<dbReference type="HAMAP" id="MF_03049">
    <property type="entry name" value="MOCS3_Uba4"/>
    <property type="match status" value="1"/>
</dbReference>
<dbReference type="InterPro" id="IPR028885">
    <property type="entry name" value="MOCS3/Uba4"/>
</dbReference>
<dbReference type="InterPro" id="IPR001763">
    <property type="entry name" value="Rhodanese-like_dom"/>
</dbReference>
<dbReference type="InterPro" id="IPR036873">
    <property type="entry name" value="Rhodanese-like_dom_sf"/>
</dbReference>
<dbReference type="InterPro" id="IPR045886">
    <property type="entry name" value="ThiF/MoeB/HesA"/>
</dbReference>
<dbReference type="InterPro" id="IPR000594">
    <property type="entry name" value="ThiF_NAD_FAD-bd"/>
</dbReference>
<dbReference type="InterPro" id="IPR035985">
    <property type="entry name" value="Ubiquitin-activating_enz"/>
</dbReference>
<dbReference type="PANTHER" id="PTHR10953:SF102">
    <property type="entry name" value="ADENYLYLTRANSFERASE AND SULFURTRANSFERASE MOCS3"/>
    <property type="match status" value="1"/>
</dbReference>
<dbReference type="PANTHER" id="PTHR10953">
    <property type="entry name" value="UBIQUITIN-ACTIVATING ENZYME E1"/>
    <property type="match status" value="1"/>
</dbReference>
<dbReference type="Pfam" id="PF00581">
    <property type="entry name" value="Rhodanese"/>
    <property type="match status" value="1"/>
</dbReference>
<dbReference type="Pfam" id="PF00899">
    <property type="entry name" value="ThiF"/>
    <property type="match status" value="1"/>
</dbReference>
<dbReference type="SMART" id="SM00450">
    <property type="entry name" value="RHOD"/>
    <property type="match status" value="1"/>
</dbReference>
<dbReference type="SUPFAM" id="SSF69572">
    <property type="entry name" value="Activating enzymes of the ubiquitin-like proteins"/>
    <property type="match status" value="1"/>
</dbReference>
<dbReference type="PROSITE" id="PS50206">
    <property type="entry name" value="RHODANESE_3"/>
    <property type="match status" value="1"/>
</dbReference>
<proteinExistence type="inferred from homology"/>
<evidence type="ECO:0000250" key="1">
    <source>
        <dbReference type="UniProtKB" id="P38820"/>
    </source>
</evidence>
<evidence type="ECO:0000255" key="2">
    <source>
        <dbReference type="HAMAP-Rule" id="MF_03049"/>
    </source>
</evidence>
<sequence length="440" mass="49389">MNDYHLEDTTSELEALRLENAQLREQLAKREDSSRDYPLSLEEYQRYGRQMIVEETGGVAGQVKLKNTRVLVVGAGGLGCPALPYLAGAGVGQIGIVDNDVVETSNLHRQVLHDSSRVGMLKCESARQYITKLNPHINVVTYPVRLNSSNAFDIFKGYNYILDCTDSPLTRYLVSDVAVNLGITVVSASGLGTEGQLTILNFNNIGPCYRCFYPTPPPPNAVTSCQEGGVIGPCIGLVGTMMAVETLKLILGIYTNENFSPFLMLYSGFPQQSLRTFKMRGRQEKCLCCGKNRTITKEAIEKGEINYELFCGARNYNVCEPDERISVDAFQRIYKDDEFLAKHIFLDVRPSHHYEISHFPEAVNIPIKNLRDMNGDLKKLQEKLPSVEKDSNIVILCRYGNDSQLATRLLKDKFGFSNVRDVRGGYFKYIDDIDQTIPKY</sequence>
<comment type="function">
    <text evidence="2">Plays a central role in 2-thiolation of mcm(5)S(2)U at tRNA wobble positions of cytosolic tRNA(Lys), tRNA(Glu) and tRNA(Gln). Acts by mediating the C-terminal thiocarboxylation of sulfur carrier URM1. Its N-terminus first activates URM1 as acyl-adenylate (-COAMP), then the persulfide sulfur on the catalytic cysteine is transferred to URM1 to form thiocarboxylation (-COSH) of its C-terminus. The reaction probably involves hydrogen sulfide that is generated from the persulfide intermediate and that acts as a nucleophile towards URM1. Subsequently, a transient disulfide bond is formed. Does not use thiosulfate as sulfur donor; NFS1 probably acting as a sulfur donor for thiocarboxylation reactions. Prior mcm(5) tRNA modification by the elongator complex is required for 2-thiolation. May also be involved in protein urmylation.</text>
</comment>
<comment type="cofactor">
    <cofactor evidence="2">
        <name>Zn(2+)</name>
        <dbReference type="ChEBI" id="CHEBI:29105"/>
    </cofactor>
    <text evidence="2">Binds 1 zinc ion per subunit.</text>
</comment>
<comment type="pathway">
    <text evidence="2">tRNA modification; 5-methoxycarbonylmethyl-2-thiouridine-tRNA biosynthesis.</text>
</comment>
<comment type="subcellular location">
    <subcellularLocation>
        <location evidence="1">Cytoplasm</location>
        <location evidence="1">Cytosol</location>
    </subcellularLocation>
</comment>
<comment type="similarity">
    <text evidence="2">In the N-terminal section; belongs to the HesA/MoeB/ThiF family. UBA4 subfamily.</text>
</comment>
<keyword id="KW-0007">Acetylation</keyword>
<keyword id="KW-0067">ATP-binding</keyword>
<keyword id="KW-0963">Cytoplasm</keyword>
<keyword id="KW-0479">Metal-binding</keyword>
<keyword id="KW-0511">Multifunctional enzyme</keyword>
<keyword id="KW-0547">Nucleotide-binding</keyword>
<keyword id="KW-0548">Nucleotidyltransferase</keyword>
<keyword id="KW-0597">Phosphoprotein</keyword>
<keyword id="KW-0808">Transferase</keyword>
<keyword id="KW-0819">tRNA processing</keyword>
<keyword id="KW-0833">Ubl conjugation pathway</keyword>
<keyword id="KW-0862">Zinc</keyword>
<gene>
    <name evidence="2" type="primary">UBA4</name>
    <name type="synonym">NCS3</name>
    <name type="ORF">SCY_2503</name>
</gene>
<protein>
    <recommendedName>
        <fullName evidence="2">Adenylyltransferase and sulfurtransferase UBA4</fullName>
    </recommendedName>
    <alternativeName>
        <fullName>Needs CLA4 to survive protein 3</fullName>
    </alternativeName>
    <alternativeName>
        <fullName evidence="2">Ubiquitin-like protein activator 4</fullName>
    </alternativeName>
    <domain>
        <recommendedName>
            <fullName evidence="2">Adenylyltransferase UBA4</fullName>
            <ecNumber evidence="2">2.7.7.-</ecNumber>
        </recommendedName>
    </domain>
    <domain>
        <recommendedName>
            <fullName evidence="2">Sulfurtransferase UBA4</fullName>
            <ecNumber evidence="2">2.8.1.-</ecNumber>
        </recommendedName>
    </domain>
</protein>
<feature type="chain" id="PRO_0000369238" description="Adenylyltransferase and sulfurtransferase UBA4">
    <location>
        <begin position="1"/>
        <end position="440"/>
    </location>
</feature>
<feature type="domain" description="Rhodanese" evidence="2">
    <location>
        <begin position="339"/>
        <end position="438"/>
    </location>
</feature>
<feature type="active site" description="Glycyl thioester intermediate; for adenylyltransferase activity" evidence="2">
    <location>
        <position position="225"/>
    </location>
</feature>
<feature type="active site" description="Cysteine persulfide intermediate; for sulfurtransferase activity" evidence="2">
    <location>
        <position position="397"/>
    </location>
</feature>
<feature type="binding site" evidence="2">
    <location>
        <position position="77"/>
    </location>
    <ligand>
        <name>ATP</name>
        <dbReference type="ChEBI" id="CHEBI:30616"/>
    </ligand>
</feature>
<feature type="binding site" evidence="2">
    <location>
        <position position="98"/>
    </location>
    <ligand>
        <name>ATP</name>
        <dbReference type="ChEBI" id="CHEBI:30616"/>
    </ligand>
</feature>
<feature type="binding site" evidence="2">
    <location>
        <begin position="105"/>
        <end position="109"/>
    </location>
    <ligand>
        <name>ATP</name>
        <dbReference type="ChEBI" id="CHEBI:30616"/>
    </ligand>
</feature>
<feature type="binding site" evidence="2">
    <location>
        <position position="122"/>
    </location>
    <ligand>
        <name>ATP</name>
        <dbReference type="ChEBI" id="CHEBI:30616"/>
    </ligand>
</feature>
<feature type="binding site" evidence="2">
    <location>
        <begin position="166"/>
        <end position="167"/>
    </location>
    <ligand>
        <name>ATP</name>
        <dbReference type="ChEBI" id="CHEBI:30616"/>
    </ligand>
</feature>
<feature type="binding site" evidence="2">
    <location>
        <position position="208"/>
    </location>
    <ligand>
        <name>Zn(2+)</name>
        <dbReference type="ChEBI" id="CHEBI:29105"/>
    </ligand>
</feature>
<feature type="binding site" evidence="2">
    <location>
        <position position="211"/>
    </location>
    <ligand>
        <name>Zn(2+)</name>
        <dbReference type="ChEBI" id="CHEBI:29105"/>
    </ligand>
</feature>
<feature type="binding site" evidence="2">
    <location>
        <position position="286"/>
    </location>
    <ligand>
        <name>Zn(2+)</name>
        <dbReference type="ChEBI" id="CHEBI:29105"/>
    </ligand>
</feature>
<feature type="binding site" evidence="2">
    <location>
        <position position="289"/>
    </location>
    <ligand>
        <name>Zn(2+)</name>
        <dbReference type="ChEBI" id="CHEBI:29105"/>
    </ligand>
</feature>
<feature type="modified residue" description="N-acetylmethionine" evidence="1">
    <location>
        <position position="1"/>
    </location>
</feature>
<feature type="modified residue" description="Phosphoserine" evidence="1">
    <location>
        <position position="326"/>
    </location>
</feature>
<accession>A6ZT19</accession>
<reference key="1">
    <citation type="journal article" date="2007" name="Proc. Natl. Acad. Sci. U.S.A.">
        <title>Genome sequencing and comparative analysis of Saccharomyces cerevisiae strain YJM789.</title>
        <authorList>
            <person name="Wei W."/>
            <person name="McCusker J.H."/>
            <person name="Hyman R.W."/>
            <person name="Jones T."/>
            <person name="Ning Y."/>
            <person name="Cao Z."/>
            <person name="Gu Z."/>
            <person name="Bruno D."/>
            <person name="Miranda M."/>
            <person name="Nguyen M."/>
            <person name="Wilhelmy J."/>
            <person name="Komp C."/>
            <person name="Tamse R."/>
            <person name="Wang X."/>
            <person name="Jia P."/>
            <person name="Luedi P."/>
            <person name="Oefner P.J."/>
            <person name="David L."/>
            <person name="Dietrich F.S."/>
            <person name="Li Y."/>
            <person name="Davis R.W."/>
            <person name="Steinmetz L.M."/>
        </authorList>
    </citation>
    <scope>NUCLEOTIDE SEQUENCE [LARGE SCALE GENOMIC DNA]</scope>
    <source>
        <strain>YJM789</strain>
    </source>
</reference>
<organism>
    <name type="scientific">Saccharomyces cerevisiae (strain YJM789)</name>
    <name type="common">Baker's yeast</name>
    <dbReference type="NCBI Taxonomy" id="307796"/>
    <lineage>
        <taxon>Eukaryota</taxon>
        <taxon>Fungi</taxon>
        <taxon>Dikarya</taxon>
        <taxon>Ascomycota</taxon>
        <taxon>Saccharomycotina</taxon>
        <taxon>Saccharomycetes</taxon>
        <taxon>Saccharomycetales</taxon>
        <taxon>Saccharomycetaceae</taxon>
        <taxon>Saccharomyces</taxon>
    </lineage>
</organism>